<comment type="function">
    <text evidence="1">Catalyzes the dehydration of the S-form of NAD(P)HX at the expense of ATP, which is converted to ADP. Together with NAD(P)HX epimerase, which catalyzes the epimerization of the S- and R-forms, the enzyme allows the repair of both epimers of NAD(P)HX, a damaged form of NAD(P)H that is a result of enzymatic or heat-dependent hydration.</text>
</comment>
<comment type="catalytic activity">
    <reaction evidence="1">
        <text>(6S)-NADHX + ATP = ADP + phosphate + NADH + H(+)</text>
        <dbReference type="Rhea" id="RHEA:19017"/>
        <dbReference type="ChEBI" id="CHEBI:15378"/>
        <dbReference type="ChEBI" id="CHEBI:30616"/>
        <dbReference type="ChEBI" id="CHEBI:43474"/>
        <dbReference type="ChEBI" id="CHEBI:57945"/>
        <dbReference type="ChEBI" id="CHEBI:64074"/>
        <dbReference type="ChEBI" id="CHEBI:456216"/>
        <dbReference type="EC" id="4.2.1.93"/>
    </reaction>
</comment>
<comment type="catalytic activity">
    <reaction>
        <text>(6S)-NADPHX + ATP = ADP + phosphate + NADPH + H(+)</text>
        <dbReference type="Rhea" id="RHEA:32231"/>
        <dbReference type="ChEBI" id="CHEBI:15378"/>
        <dbReference type="ChEBI" id="CHEBI:30616"/>
        <dbReference type="ChEBI" id="CHEBI:43474"/>
        <dbReference type="ChEBI" id="CHEBI:57783"/>
        <dbReference type="ChEBI" id="CHEBI:64076"/>
        <dbReference type="ChEBI" id="CHEBI:456216"/>
        <dbReference type="EC" id="4.2.1.93"/>
    </reaction>
</comment>
<comment type="cofactor">
    <cofactor evidence="1">
        <name>Mg(2+)</name>
        <dbReference type="ChEBI" id="CHEBI:18420"/>
    </cofactor>
</comment>
<comment type="similarity">
    <text evidence="1">Belongs to the NnrD/CARKD family.</text>
</comment>
<sequence length="307" mass="33719">MDHFLKLLPKLTPQLRKGDCGKIAVIGGSLEYTGAPYYAASSVSRLGADLIHVFCAPDAAPVIKGYSPDLIVHPGMNASSILPKLNRMDAIVVGPGLGRNPTLWPLLQEIFNFVKNEKVPFVIDGDGLWFVSEHIEHFPRQMVTTVLTPNIVEFSRLCKSALGEEDVLNVKSSSQLQHLAAELSRKMDVTIYMKGEVDLVVTPNGEVSKCSTDSSLRRCGGQGDVTAGSLGLFLYWAKKNLGDDWTSAHHEAGISSSWLVRTAGRRAFEKHGRSMNTPLLLDEIPKLVRDVETREMKDTVHSDSSKH</sequence>
<organism>
    <name type="scientific">Caenorhabditis briggsae</name>
    <dbReference type="NCBI Taxonomy" id="6238"/>
    <lineage>
        <taxon>Eukaryota</taxon>
        <taxon>Metazoa</taxon>
        <taxon>Ecdysozoa</taxon>
        <taxon>Nematoda</taxon>
        <taxon>Chromadorea</taxon>
        <taxon>Rhabditida</taxon>
        <taxon>Rhabditina</taxon>
        <taxon>Rhabditomorpha</taxon>
        <taxon>Rhabditoidea</taxon>
        <taxon>Rhabditidae</taxon>
        <taxon>Peloderinae</taxon>
        <taxon>Caenorhabditis</taxon>
    </lineage>
</organism>
<evidence type="ECO:0000255" key="1">
    <source>
        <dbReference type="HAMAP-Rule" id="MF_03157"/>
    </source>
</evidence>
<dbReference type="EC" id="4.2.1.93" evidence="1"/>
<dbReference type="EMBL" id="HE601347">
    <property type="protein sequence ID" value="CAP27064.1"/>
    <property type="molecule type" value="Genomic_DNA"/>
</dbReference>
<dbReference type="RefSeq" id="XP_002642421.1">
    <property type="nucleotide sequence ID" value="XM_002642375.1"/>
</dbReference>
<dbReference type="SMR" id="A8X354"/>
<dbReference type="FunCoup" id="A8X354">
    <property type="interactions" value="1091"/>
</dbReference>
<dbReference type="STRING" id="6238.A8X354"/>
<dbReference type="EnsemblMetazoa" id="CBG06820.1">
    <property type="protein sequence ID" value="CBG06820.1"/>
    <property type="gene ID" value="WBGene00029031"/>
</dbReference>
<dbReference type="GeneID" id="8584415"/>
<dbReference type="KEGG" id="cbr:CBG_06820"/>
<dbReference type="CTD" id="8584415"/>
<dbReference type="WormBase" id="CBG06820">
    <property type="protein sequence ID" value="CBP01748"/>
    <property type="gene ID" value="WBGene00029031"/>
</dbReference>
<dbReference type="eggNOG" id="KOG3974">
    <property type="taxonomic scope" value="Eukaryota"/>
</dbReference>
<dbReference type="HOGENOM" id="CLU_030651_3_0_1"/>
<dbReference type="InParanoid" id="A8X354"/>
<dbReference type="OMA" id="WRAAYHN"/>
<dbReference type="OrthoDB" id="8110916at2759"/>
<dbReference type="Proteomes" id="UP000008549">
    <property type="component" value="Unassembled WGS sequence"/>
</dbReference>
<dbReference type="GO" id="GO:0005524">
    <property type="term" value="F:ATP binding"/>
    <property type="evidence" value="ECO:0007669"/>
    <property type="project" value="UniProtKB-KW"/>
</dbReference>
<dbReference type="GO" id="GO:0047453">
    <property type="term" value="F:ATP-dependent NAD(P)H-hydrate dehydratase activity"/>
    <property type="evidence" value="ECO:0000318"/>
    <property type="project" value="GO_Central"/>
</dbReference>
<dbReference type="GO" id="GO:0110051">
    <property type="term" value="P:metabolite repair"/>
    <property type="evidence" value="ECO:0000318"/>
    <property type="project" value="GO_Central"/>
</dbReference>
<dbReference type="GO" id="GO:0046496">
    <property type="term" value="P:nicotinamide nucleotide metabolic process"/>
    <property type="evidence" value="ECO:0007669"/>
    <property type="project" value="UniProtKB-UniRule"/>
</dbReference>
<dbReference type="CDD" id="cd01171">
    <property type="entry name" value="YXKO-related"/>
    <property type="match status" value="1"/>
</dbReference>
<dbReference type="FunFam" id="3.40.1190.20:FF:000091">
    <property type="entry name" value="ATP-dependent (S)-NAD(P)H-hydrate dehydratase"/>
    <property type="match status" value="1"/>
</dbReference>
<dbReference type="Gene3D" id="3.40.1190.20">
    <property type="match status" value="1"/>
</dbReference>
<dbReference type="HAMAP" id="MF_01965">
    <property type="entry name" value="NADHX_dehydratase"/>
    <property type="match status" value="1"/>
</dbReference>
<dbReference type="InterPro" id="IPR017953">
    <property type="entry name" value="Carbohydrate_kinase_pred_CS"/>
</dbReference>
<dbReference type="InterPro" id="IPR000631">
    <property type="entry name" value="CARKD"/>
</dbReference>
<dbReference type="InterPro" id="IPR029056">
    <property type="entry name" value="Ribokinase-like"/>
</dbReference>
<dbReference type="NCBIfam" id="TIGR00196">
    <property type="entry name" value="yjeF_cterm"/>
    <property type="match status" value="1"/>
</dbReference>
<dbReference type="PANTHER" id="PTHR12592:SF0">
    <property type="entry name" value="ATP-DEPENDENT (S)-NAD(P)H-HYDRATE DEHYDRATASE"/>
    <property type="match status" value="1"/>
</dbReference>
<dbReference type="PANTHER" id="PTHR12592">
    <property type="entry name" value="ATP-DEPENDENT (S)-NAD(P)H-HYDRATE DEHYDRATASE FAMILY MEMBER"/>
    <property type="match status" value="1"/>
</dbReference>
<dbReference type="Pfam" id="PF01256">
    <property type="entry name" value="Carb_kinase"/>
    <property type="match status" value="1"/>
</dbReference>
<dbReference type="SUPFAM" id="SSF53613">
    <property type="entry name" value="Ribokinase-like"/>
    <property type="match status" value="1"/>
</dbReference>
<dbReference type="PROSITE" id="PS01049">
    <property type="entry name" value="YJEF_C_1"/>
    <property type="match status" value="1"/>
</dbReference>
<dbReference type="PROSITE" id="PS01050">
    <property type="entry name" value="YJEF_C_2"/>
    <property type="match status" value="1"/>
</dbReference>
<dbReference type="PROSITE" id="PS51383">
    <property type="entry name" value="YJEF_C_3"/>
    <property type="match status" value="1"/>
</dbReference>
<protein>
    <recommendedName>
        <fullName evidence="1">ATP-dependent (S)-NAD(P)H-hydrate dehydratase</fullName>
        <ecNumber evidence="1">4.2.1.93</ecNumber>
    </recommendedName>
    <alternativeName>
        <fullName evidence="1">ATP-dependent NAD(P)HX dehydratase</fullName>
    </alternativeName>
</protein>
<keyword id="KW-0067">ATP-binding</keyword>
<keyword id="KW-0456">Lyase</keyword>
<keyword id="KW-0520">NAD</keyword>
<keyword id="KW-0521">NADP</keyword>
<keyword id="KW-0547">Nucleotide-binding</keyword>
<keyword id="KW-0597">Phosphoprotein</keyword>
<keyword id="KW-1185">Reference proteome</keyword>
<gene>
    <name type="ORF">CBG06820</name>
</gene>
<accession>A8X354</accession>
<reference key="1">
    <citation type="journal article" date="2003" name="PLoS Biol.">
        <title>The genome sequence of Caenorhabditis briggsae: a platform for comparative genomics.</title>
        <authorList>
            <person name="Stein L.D."/>
            <person name="Bao Z."/>
            <person name="Blasiar D."/>
            <person name="Blumenthal T."/>
            <person name="Brent M.R."/>
            <person name="Chen N."/>
            <person name="Chinwalla A."/>
            <person name="Clarke L."/>
            <person name="Clee C."/>
            <person name="Coghlan A."/>
            <person name="Coulson A."/>
            <person name="D'Eustachio P."/>
            <person name="Fitch D.H.A."/>
            <person name="Fulton L.A."/>
            <person name="Fulton R.E."/>
            <person name="Griffiths-Jones S."/>
            <person name="Harris T.W."/>
            <person name="Hillier L.W."/>
            <person name="Kamath R."/>
            <person name="Kuwabara P.E."/>
            <person name="Mardis E.R."/>
            <person name="Marra M.A."/>
            <person name="Miner T.L."/>
            <person name="Minx P."/>
            <person name="Mullikin J.C."/>
            <person name="Plumb R.W."/>
            <person name="Rogers J."/>
            <person name="Schein J.E."/>
            <person name="Sohrmann M."/>
            <person name="Spieth J."/>
            <person name="Stajich J.E."/>
            <person name="Wei C."/>
            <person name="Willey D."/>
            <person name="Wilson R.K."/>
            <person name="Durbin R.M."/>
            <person name="Waterston R.H."/>
        </authorList>
    </citation>
    <scope>NUCLEOTIDE SEQUENCE [LARGE SCALE GENOMIC DNA]</scope>
    <source>
        <strain>AF16</strain>
    </source>
</reference>
<name>NNRD_CAEBR</name>
<proteinExistence type="inferred from homology"/>
<feature type="chain" id="PRO_0000416161" description="ATP-dependent (S)-NAD(P)H-hydrate dehydratase">
    <location>
        <begin position="1"/>
        <end position="307"/>
    </location>
</feature>
<feature type="domain" description="YjeF C-terminal" evidence="1">
    <location>
        <begin position="1"/>
        <end position="291"/>
    </location>
</feature>
<feature type="binding site" evidence="1">
    <location>
        <position position="96"/>
    </location>
    <ligand>
        <name>(6S)-NADPHX</name>
        <dbReference type="ChEBI" id="CHEBI:64076"/>
    </ligand>
</feature>
<feature type="binding site" evidence="1">
    <location>
        <begin position="150"/>
        <end position="156"/>
    </location>
    <ligand>
        <name>(6S)-NADPHX</name>
        <dbReference type="ChEBI" id="CHEBI:64076"/>
    </ligand>
</feature>
<feature type="binding site" evidence="1">
    <location>
        <begin position="194"/>
        <end position="198"/>
    </location>
    <ligand>
        <name>ATP</name>
        <dbReference type="ChEBI" id="CHEBI:30616"/>
    </ligand>
</feature>
<feature type="binding site" evidence="1">
    <location>
        <begin position="214"/>
        <end position="223"/>
    </location>
    <ligand>
        <name>ATP</name>
        <dbReference type="ChEBI" id="CHEBI:30616"/>
    </ligand>
</feature>
<feature type="binding site" evidence="1">
    <location>
        <position position="224"/>
    </location>
    <ligand>
        <name>(6S)-NADPHX</name>
        <dbReference type="ChEBI" id="CHEBI:64076"/>
    </ligand>
</feature>